<sequence>MTTRKESELEGVTLLGNQGTNYLFEYAPDVLESFPNKHVNRDYFVKFNCPEFTSLCPKTGQPDFATIYISYIPDEKMVESKSLKLYLFSFRNHGDFHEDCMNIIMNDLIELMDPRYIEVWGKFTPRGGISIDPYTNYGKPGTKYEKMAEYRMMNHDLYPETIDNR</sequence>
<dbReference type="EC" id="1.7.1.13"/>
<dbReference type="EMBL" id="AL009126">
    <property type="protein sequence ID" value="CAB13248.1"/>
    <property type="molecule type" value="Genomic_DNA"/>
</dbReference>
<dbReference type="PIR" id="D69868">
    <property type="entry name" value="D69868"/>
</dbReference>
<dbReference type="RefSeq" id="NP_389258.1">
    <property type="nucleotide sequence ID" value="NC_000964.3"/>
</dbReference>
<dbReference type="RefSeq" id="WP_003218613.1">
    <property type="nucleotide sequence ID" value="NZ_OZ025638.1"/>
</dbReference>
<dbReference type="PDB" id="4F8B">
    <property type="method" value="X-ray"/>
    <property type="resolution" value="2.50 A"/>
    <property type="chains" value="A/B/C/D/E=1-165"/>
</dbReference>
<dbReference type="PDB" id="4FGC">
    <property type="method" value="X-ray"/>
    <property type="resolution" value="2.50 A"/>
    <property type="chains" value="A/B/C/D/E=1-165"/>
</dbReference>
<dbReference type="PDB" id="5UDG">
    <property type="method" value="X-ray"/>
    <property type="resolution" value="2.50 A"/>
    <property type="chains" value="A/B/C/D/E=21-165"/>
</dbReference>
<dbReference type="PDBsum" id="4F8B"/>
<dbReference type="PDBsum" id="4FGC"/>
<dbReference type="PDBsum" id="5UDG"/>
<dbReference type="SMR" id="O31678"/>
<dbReference type="FunCoup" id="O31678">
    <property type="interactions" value="89"/>
</dbReference>
<dbReference type="STRING" id="224308.BSU13750"/>
<dbReference type="jPOST" id="O31678"/>
<dbReference type="PaxDb" id="224308-BSU13750"/>
<dbReference type="EnsemblBacteria" id="CAB13248">
    <property type="protein sequence ID" value="CAB13248"/>
    <property type="gene ID" value="BSU_13750"/>
</dbReference>
<dbReference type="GeneID" id="92916608"/>
<dbReference type="GeneID" id="939296"/>
<dbReference type="KEGG" id="bsu:BSU13750"/>
<dbReference type="PATRIC" id="fig|224308.179.peg.1492"/>
<dbReference type="eggNOG" id="COG0780">
    <property type="taxonomic scope" value="Bacteria"/>
</dbReference>
<dbReference type="InParanoid" id="O31678"/>
<dbReference type="OrthoDB" id="9795077at2"/>
<dbReference type="PhylomeDB" id="O31678"/>
<dbReference type="BioCyc" id="BSUB:BSU13750-MONOMER"/>
<dbReference type="BRENDA" id="1.7.1.13">
    <property type="organism ID" value="658"/>
</dbReference>
<dbReference type="SABIO-RK" id="O31678"/>
<dbReference type="UniPathway" id="UPA00392"/>
<dbReference type="EvolutionaryTrace" id="O31678"/>
<dbReference type="PRO" id="PR:O31678"/>
<dbReference type="Proteomes" id="UP000001570">
    <property type="component" value="Chromosome"/>
</dbReference>
<dbReference type="GO" id="GO:0005829">
    <property type="term" value="C:cytosol"/>
    <property type="evidence" value="ECO:0000318"/>
    <property type="project" value="GO_Central"/>
</dbReference>
<dbReference type="GO" id="GO:0046872">
    <property type="term" value="F:metal ion binding"/>
    <property type="evidence" value="ECO:0007669"/>
    <property type="project" value="UniProtKB-KW"/>
</dbReference>
<dbReference type="GO" id="GO:0033739">
    <property type="term" value="F:preQ1 synthase activity"/>
    <property type="evidence" value="ECO:0000318"/>
    <property type="project" value="GO_Central"/>
</dbReference>
<dbReference type="GO" id="GO:0008616">
    <property type="term" value="P:queuosine biosynthetic process"/>
    <property type="evidence" value="ECO:0000318"/>
    <property type="project" value="GO_Central"/>
</dbReference>
<dbReference type="GO" id="GO:0006400">
    <property type="term" value="P:tRNA modification"/>
    <property type="evidence" value="ECO:0007669"/>
    <property type="project" value="UniProtKB-UniRule"/>
</dbReference>
<dbReference type="Gene3D" id="3.30.1130.10">
    <property type="match status" value="1"/>
</dbReference>
<dbReference type="HAMAP" id="MF_00818">
    <property type="entry name" value="QueF_type1"/>
    <property type="match status" value="1"/>
</dbReference>
<dbReference type="InterPro" id="IPR043133">
    <property type="entry name" value="GTP-CH-I_C/QueF"/>
</dbReference>
<dbReference type="InterPro" id="IPR050084">
    <property type="entry name" value="NADPH_dep_7-cyano-7-deazaG_red"/>
</dbReference>
<dbReference type="InterPro" id="IPR029500">
    <property type="entry name" value="QueF"/>
</dbReference>
<dbReference type="InterPro" id="IPR016856">
    <property type="entry name" value="QueF_type1"/>
</dbReference>
<dbReference type="NCBIfam" id="TIGR03139">
    <property type="entry name" value="QueF-II"/>
    <property type="match status" value="1"/>
</dbReference>
<dbReference type="PANTHER" id="PTHR34354">
    <property type="entry name" value="NADPH-DEPENDENT 7-CYANO-7-DEAZAGUANINE REDUCTASE"/>
    <property type="match status" value="1"/>
</dbReference>
<dbReference type="PANTHER" id="PTHR34354:SF1">
    <property type="entry name" value="NADPH-DEPENDENT 7-CYANO-7-DEAZAGUANINE REDUCTASE"/>
    <property type="match status" value="1"/>
</dbReference>
<dbReference type="Pfam" id="PF14489">
    <property type="entry name" value="QueF"/>
    <property type="match status" value="1"/>
</dbReference>
<dbReference type="PIRSF" id="PIRSF027377">
    <property type="entry name" value="Nitrile_oxidored_QueF"/>
    <property type="match status" value="1"/>
</dbReference>
<dbReference type="SUPFAM" id="SSF55620">
    <property type="entry name" value="Tetrahydrobiopterin biosynthesis enzymes-like"/>
    <property type="match status" value="1"/>
</dbReference>
<evidence type="ECO:0000269" key="1">
    <source>
    </source>
</evidence>
<evidence type="ECO:0000269" key="2">
    <source>
    </source>
</evidence>
<evidence type="ECO:0000269" key="3">
    <source>
    </source>
</evidence>
<evidence type="ECO:0000305" key="4"/>
<evidence type="ECO:0000305" key="5">
    <source>
    </source>
</evidence>
<evidence type="ECO:0000305" key="6">
    <source>
    </source>
</evidence>
<evidence type="ECO:0007829" key="7">
    <source>
        <dbReference type="PDB" id="4FGC"/>
    </source>
</evidence>
<evidence type="ECO:0007829" key="8">
    <source>
        <dbReference type="PDB" id="5UDG"/>
    </source>
</evidence>
<reference key="1">
    <citation type="journal article" date="1997" name="Nature">
        <title>The complete genome sequence of the Gram-positive bacterium Bacillus subtilis.</title>
        <authorList>
            <person name="Kunst F."/>
            <person name="Ogasawara N."/>
            <person name="Moszer I."/>
            <person name="Albertini A.M."/>
            <person name="Alloni G."/>
            <person name="Azevedo V."/>
            <person name="Bertero M.G."/>
            <person name="Bessieres P."/>
            <person name="Bolotin A."/>
            <person name="Borchert S."/>
            <person name="Borriss R."/>
            <person name="Boursier L."/>
            <person name="Brans A."/>
            <person name="Braun M."/>
            <person name="Brignell S.C."/>
            <person name="Bron S."/>
            <person name="Brouillet S."/>
            <person name="Bruschi C.V."/>
            <person name="Caldwell B."/>
            <person name="Capuano V."/>
            <person name="Carter N.M."/>
            <person name="Choi S.-K."/>
            <person name="Codani J.-J."/>
            <person name="Connerton I.F."/>
            <person name="Cummings N.J."/>
            <person name="Daniel R.A."/>
            <person name="Denizot F."/>
            <person name="Devine K.M."/>
            <person name="Duesterhoeft A."/>
            <person name="Ehrlich S.D."/>
            <person name="Emmerson P.T."/>
            <person name="Entian K.-D."/>
            <person name="Errington J."/>
            <person name="Fabret C."/>
            <person name="Ferrari E."/>
            <person name="Foulger D."/>
            <person name="Fritz C."/>
            <person name="Fujita M."/>
            <person name="Fujita Y."/>
            <person name="Fuma S."/>
            <person name="Galizzi A."/>
            <person name="Galleron N."/>
            <person name="Ghim S.-Y."/>
            <person name="Glaser P."/>
            <person name="Goffeau A."/>
            <person name="Golightly E.J."/>
            <person name="Grandi G."/>
            <person name="Guiseppi G."/>
            <person name="Guy B.J."/>
            <person name="Haga K."/>
            <person name="Haiech J."/>
            <person name="Harwood C.R."/>
            <person name="Henaut A."/>
            <person name="Hilbert H."/>
            <person name="Holsappel S."/>
            <person name="Hosono S."/>
            <person name="Hullo M.-F."/>
            <person name="Itaya M."/>
            <person name="Jones L.-M."/>
            <person name="Joris B."/>
            <person name="Karamata D."/>
            <person name="Kasahara Y."/>
            <person name="Klaerr-Blanchard M."/>
            <person name="Klein C."/>
            <person name="Kobayashi Y."/>
            <person name="Koetter P."/>
            <person name="Koningstein G."/>
            <person name="Krogh S."/>
            <person name="Kumano M."/>
            <person name="Kurita K."/>
            <person name="Lapidus A."/>
            <person name="Lardinois S."/>
            <person name="Lauber J."/>
            <person name="Lazarevic V."/>
            <person name="Lee S.-M."/>
            <person name="Levine A."/>
            <person name="Liu H."/>
            <person name="Masuda S."/>
            <person name="Mauel C."/>
            <person name="Medigue C."/>
            <person name="Medina N."/>
            <person name="Mellado R.P."/>
            <person name="Mizuno M."/>
            <person name="Moestl D."/>
            <person name="Nakai S."/>
            <person name="Noback M."/>
            <person name="Noone D."/>
            <person name="O'Reilly M."/>
            <person name="Ogawa K."/>
            <person name="Ogiwara A."/>
            <person name="Oudega B."/>
            <person name="Park S.-H."/>
            <person name="Parro V."/>
            <person name="Pohl T.M."/>
            <person name="Portetelle D."/>
            <person name="Porwollik S."/>
            <person name="Prescott A.M."/>
            <person name="Presecan E."/>
            <person name="Pujic P."/>
            <person name="Purnelle B."/>
            <person name="Rapoport G."/>
            <person name="Rey M."/>
            <person name="Reynolds S."/>
            <person name="Rieger M."/>
            <person name="Rivolta C."/>
            <person name="Rocha E."/>
            <person name="Roche B."/>
            <person name="Rose M."/>
            <person name="Sadaie Y."/>
            <person name="Sato T."/>
            <person name="Scanlan E."/>
            <person name="Schleich S."/>
            <person name="Schroeter R."/>
            <person name="Scoffone F."/>
            <person name="Sekiguchi J."/>
            <person name="Sekowska A."/>
            <person name="Seror S.J."/>
            <person name="Serror P."/>
            <person name="Shin B.-S."/>
            <person name="Soldo B."/>
            <person name="Sorokin A."/>
            <person name="Tacconi E."/>
            <person name="Takagi T."/>
            <person name="Takahashi H."/>
            <person name="Takemaru K."/>
            <person name="Takeuchi M."/>
            <person name="Tamakoshi A."/>
            <person name="Tanaka T."/>
            <person name="Terpstra P."/>
            <person name="Tognoni A."/>
            <person name="Tosato V."/>
            <person name="Uchiyama S."/>
            <person name="Vandenbol M."/>
            <person name="Vannier F."/>
            <person name="Vassarotti A."/>
            <person name="Viari A."/>
            <person name="Wambutt R."/>
            <person name="Wedler E."/>
            <person name="Wedler H."/>
            <person name="Weitzenegger T."/>
            <person name="Winters P."/>
            <person name="Wipat A."/>
            <person name="Yamamoto H."/>
            <person name="Yamane K."/>
            <person name="Yasumoto K."/>
            <person name="Yata K."/>
            <person name="Yoshida K."/>
            <person name="Yoshikawa H.-F."/>
            <person name="Zumstein E."/>
            <person name="Yoshikawa H."/>
            <person name="Danchin A."/>
        </authorList>
    </citation>
    <scope>NUCLEOTIDE SEQUENCE [LARGE SCALE GENOMIC DNA]</scope>
    <source>
        <strain>168</strain>
    </source>
</reference>
<reference key="2">
    <citation type="journal article" date="2004" name="J. Biol. Chem.">
        <title>Identification of four genes necessary for biosynthesis of the modified nucleoside queuosine.</title>
        <authorList>
            <person name="Reader J.S."/>
            <person name="Metzgar D."/>
            <person name="Schimmel P."/>
            <person name="de Crecy-Lagard V."/>
        </authorList>
    </citation>
    <scope>INVOLVEMENT IN QUEUOSINE BIOSYNTHESIS</scope>
    <scope>GENE NAME</scope>
</reference>
<reference key="3">
    <citation type="journal article" date="2005" name="Proc. Natl. Acad. Sci. U.S.A.">
        <title>From cyclohydrolase to oxidoreductase: discovery of nitrile reductase activity in a common fold.</title>
        <authorList>
            <person name="Van Lanen S.G."/>
            <person name="Reader J.S."/>
            <person name="Swairjo M.A."/>
            <person name="de Crecy-Lagard V."/>
            <person name="Lee B."/>
            <person name="Iwata-Reuyl D."/>
        </authorList>
    </citation>
    <scope>FUNCTION</scope>
</reference>
<reference key="4">
    <citation type="journal article" date="2007" name="Biochemistry">
        <title>Mechanistic studies of Bacillus subtilis QueF, the nitrile oxidoreductase involved in queuosine biosynthesis.</title>
        <authorList>
            <person name="Lee B.W."/>
            <person name="Van Lanen S.G."/>
            <person name="Iwata-Reuyl D."/>
        </authorList>
    </citation>
    <scope>FUNCTION</scope>
    <scope>CATALYTIC ACTIVITY</scope>
    <scope>BIOPHYSICOCHEMICAL PROPERTIES</scope>
    <scope>NO METAL COFACTOR</scope>
    <scope>ACTIVITY REGULATION</scope>
    <scope>REACTION MECHANISM</scope>
    <scope>ACTIVE SITE</scope>
    <scope>MUTAGENESIS OF CYS-56</scope>
</reference>
<reference key="5">
    <citation type="journal article" date="2012" name="J. Biol. Chem.">
        <title>Structural basis of biological nitrile reduction.</title>
        <authorList>
            <person name="Chikwana V.M."/>
            <person name="Stec B."/>
            <person name="Lee B.W."/>
            <person name="de Crecy-Lagard V."/>
            <person name="Iwata-Reuyl D."/>
            <person name="Swairjo M.A."/>
        </authorList>
    </citation>
    <scope>X-RAY CRYSTALLOGRAPHY (2.5 ANGSTROMS) OF WILD-TYPE IN COMPLEX WITH SUBSTRATE TRAPPED AS A COVALENT THIOIMIDE INTERMEDIATE AND MUTANT ALA-56 IN COMPLEX WITH SUBSTRATE BOUND NON-COVALENTLY</scope>
    <scope>REACTION MECHANISM</scope>
    <scope>ACTIVE SITES</scope>
</reference>
<feature type="chain" id="PRO_0000162957" description="NADPH-dependent 7-cyano-7-deazaguanine reductase">
    <location>
        <begin position="1"/>
        <end position="165"/>
    </location>
</feature>
<feature type="active site" description="Thioimide intermediate">
    <location>
        <position position="56"/>
    </location>
</feature>
<feature type="active site" description="Proton donor">
    <location>
        <position position="63"/>
    </location>
</feature>
<feature type="binding site">
    <location>
        <begin position="78"/>
        <end position="80"/>
    </location>
    <ligand>
        <name>substrate</name>
    </ligand>
</feature>
<feature type="binding site">
    <location>
        <begin position="97"/>
        <end position="98"/>
    </location>
    <ligand>
        <name>substrate</name>
    </ligand>
</feature>
<feature type="binding site">
    <location>
        <position position="163"/>
    </location>
    <ligand>
        <name>Mg(2+)</name>
        <dbReference type="ChEBI" id="CHEBI:18420"/>
    </ligand>
</feature>
<feature type="binding site">
    <location>
        <position position="165"/>
    </location>
    <ligand>
        <name>Mg(2+)</name>
        <dbReference type="ChEBI" id="CHEBI:18420"/>
    </ligand>
</feature>
<feature type="mutagenesis site" description="Loss of catalytic activity." evidence="2">
    <original>C</original>
    <variation>A</variation>
    <variation>S</variation>
    <location>
        <position position="56"/>
    </location>
</feature>
<feature type="turn" evidence="8">
    <location>
        <begin position="22"/>
        <end position="24"/>
    </location>
</feature>
<feature type="helix" evidence="7">
    <location>
        <begin position="28"/>
        <end position="30"/>
    </location>
</feature>
<feature type="strand" evidence="7">
    <location>
        <begin position="33"/>
        <end position="35"/>
    </location>
</feature>
<feature type="turn" evidence="8">
    <location>
        <begin position="37"/>
        <end position="40"/>
    </location>
</feature>
<feature type="strand" evidence="7">
    <location>
        <begin position="44"/>
        <end position="55"/>
    </location>
</feature>
<feature type="strand" evidence="7">
    <location>
        <begin position="57"/>
        <end position="59"/>
    </location>
</feature>
<feature type="strand" evidence="7">
    <location>
        <begin position="62"/>
        <end position="72"/>
    </location>
</feature>
<feature type="strand" evidence="7">
    <location>
        <begin position="74"/>
        <end position="78"/>
    </location>
</feature>
<feature type="helix" evidence="7">
    <location>
        <begin position="80"/>
        <end position="88"/>
    </location>
</feature>
<feature type="turn" evidence="7">
    <location>
        <begin position="89"/>
        <end position="92"/>
    </location>
</feature>
<feature type="helix" evidence="7">
    <location>
        <begin position="97"/>
        <end position="112"/>
    </location>
</feature>
<feature type="strand" evidence="7">
    <location>
        <begin position="115"/>
        <end position="123"/>
    </location>
</feature>
<feature type="strand" evidence="7">
    <location>
        <begin position="126"/>
        <end position="129"/>
    </location>
</feature>
<feature type="strand" evidence="7">
    <location>
        <begin position="134"/>
        <end position="138"/>
    </location>
</feature>
<feature type="helix" evidence="7">
    <location>
        <begin position="144"/>
        <end position="157"/>
    </location>
</feature>
<accession>O31678</accession>
<protein>
    <recommendedName>
        <fullName>NADPH-dependent 7-cyano-7-deazaguanine reductase</fullName>
        <ecNumber>1.7.1.13</ecNumber>
    </recommendedName>
    <alternativeName>
        <fullName>7-cyano-7-carbaguanine reductase</fullName>
    </alternativeName>
    <alternativeName>
        <fullName>NADPH-dependent nitrile oxidoreductase</fullName>
    </alternativeName>
    <alternativeName>
        <fullName>PreQ(0) reductase</fullName>
    </alternativeName>
</protein>
<name>QUEF_BACSU</name>
<gene>
    <name type="primary">queF</name>
    <name type="synonym">ykvM</name>
    <name type="ordered locus">BSU13750</name>
</gene>
<organism>
    <name type="scientific">Bacillus subtilis (strain 168)</name>
    <dbReference type="NCBI Taxonomy" id="224308"/>
    <lineage>
        <taxon>Bacteria</taxon>
        <taxon>Bacillati</taxon>
        <taxon>Bacillota</taxon>
        <taxon>Bacilli</taxon>
        <taxon>Bacillales</taxon>
        <taxon>Bacillaceae</taxon>
        <taxon>Bacillus</taxon>
    </lineage>
</organism>
<proteinExistence type="evidence at protein level"/>
<comment type="function">
    <text evidence="1 2">Catalyzes the NADPH-dependent reduction of 7-cyano-7-deazaguanine (preQ0) to 7-aminomethyl-7-deazaguanine (preQ1), a late step in the queuosine pathway.</text>
</comment>
<comment type="catalytic activity">
    <reaction evidence="2">
        <text>7-aminomethyl-7-carbaguanine + 2 NADP(+) = 7-cyano-7-deazaguanine + 2 NADPH + 3 H(+)</text>
        <dbReference type="Rhea" id="RHEA:13409"/>
        <dbReference type="ChEBI" id="CHEBI:15378"/>
        <dbReference type="ChEBI" id="CHEBI:45075"/>
        <dbReference type="ChEBI" id="CHEBI:57783"/>
        <dbReference type="ChEBI" id="CHEBI:58349"/>
        <dbReference type="ChEBI" id="CHEBI:58703"/>
        <dbReference type="EC" id="1.7.1.13"/>
    </reaction>
</comment>
<comment type="cofactor">
    <text>Does not require a metal cofactor.</text>
</comment>
<comment type="activity regulation">
    <text evidence="2">Activity is strongly inhibited by Cu(2+) and Fe(3+).</text>
</comment>
<comment type="biophysicochemical properties">
    <kinetics>
        <KM evidence="2">0.237 uM for 7-cyano-7-deazaguanine (at pH 7.5 and 30 degrees Celsius)</KM>
        <KM evidence="2">19.2 uM for NADPH (at pH 7.5 and 30 degrees Celsius)</KM>
        <text>kcat is 0.66 min(-1) (at pH 7.5 and 30 degrees Celsius).</text>
    </kinetics>
    <phDependence>
        <text evidence="2">Optimum pH is 7.5.</text>
    </phDependence>
</comment>
<comment type="pathway">
    <text>tRNA modification; tRNA-queuosine biosynthesis.</text>
</comment>
<comment type="subunit">
    <text evidence="3">Forms an asymmetric tunnel-fold homodecamer of two head-to-head facing pentamers, harboring 10 active sites at the intersubunit interfaces.</text>
</comment>
<comment type="subcellular location">
    <subcellularLocation>
        <location evidence="4">Cytoplasm</location>
    </subcellularLocation>
</comment>
<comment type="similarity">
    <text evidence="4">Belongs to the GTP cyclohydrolase I family. QueF type 1 subfamily.</text>
</comment>
<comment type="caution">
    <text evidence="5 6">Crystallographic structure revealed that QueF enzyme forms an asymmetric tunnel-fold homodecamer (PubMed:22787148) and not a homododecamer as originally proposed (PubMed:15767583).</text>
</comment>
<keyword id="KW-0002">3D-structure</keyword>
<keyword id="KW-0106">Calcium</keyword>
<keyword id="KW-0963">Cytoplasm</keyword>
<keyword id="KW-0460">Magnesium</keyword>
<keyword id="KW-0479">Metal-binding</keyword>
<keyword id="KW-0521">NADP</keyword>
<keyword id="KW-0560">Oxidoreductase</keyword>
<keyword id="KW-0671">Queuosine biosynthesis</keyword>
<keyword id="KW-1185">Reference proteome</keyword>